<proteinExistence type="inferred from homology"/>
<protein>
    <recommendedName>
        <fullName evidence="1">Membrane-bound lytic murein transglycosylase C</fullName>
        <ecNumber evidence="1">4.2.2.n1</ecNumber>
    </recommendedName>
    <alternativeName>
        <fullName evidence="1">Murein lyase C</fullName>
    </alternativeName>
</protein>
<name>MLTC_ECOSM</name>
<keyword id="KW-0998">Cell outer membrane</keyword>
<keyword id="KW-0961">Cell wall biogenesis/degradation</keyword>
<keyword id="KW-0449">Lipoprotein</keyword>
<keyword id="KW-0456">Lyase</keyword>
<keyword id="KW-0472">Membrane</keyword>
<keyword id="KW-0564">Palmitate</keyword>
<keyword id="KW-0732">Signal</keyword>
<organism>
    <name type="scientific">Escherichia coli (strain SMS-3-5 / SECEC)</name>
    <dbReference type="NCBI Taxonomy" id="439855"/>
    <lineage>
        <taxon>Bacteria</taxon>
        <taxon>Pseudomonadati</taxon>
        <taxon>Pseudomonadota</taxon>
        <taxon>Gammaproteobacteria</taxon>
        <taxon>Enterobacterales</taxon>
        <taxon>Enterobacteriaceae</taxon>
        <taxon>Escherichia</taxon>
    </lineage>
</organism>
<reference key="1">
    <citation type="journal article" date="2008" name="J. Bacteriol.">
        <title>Insights into the environmental resistance gene pool from the genome sequence of the multidrug-resistant environmental isolate Escherichia coli SMS-3-5.</title>
        <authorList>
            <person name="Fricke W.F."/>
            <person name="Wright M.S."/>
            <person name="Lindell A.H."/>
            <person name="Harkins D.M."/>
            <person name="Baker-Austin C."/>
            <person name="Ravel J."/>
            <person name="Stepanauskas R."/>
        </authorList>
    </citation>
    <scope>NUCLEOTIDE SEQUENCE [LARGE SCALE GENOMIC DNA]</scope>
    <source>
        <strain>SMS-3-5 / SECEC</strain>
    </source>
</reference>
<dbReference type="EC" id="4.2.2.n1" evidence="1"/>
<dbReference type="EMBL" id="CP000970">
    <property type="protein sequence ID" value="ACB19197.1"/>
    <property type="molecule type" value="Genomic_DNA"/>
</dbReference>
<dbReference type="RefSeq" id="WP_001618095.1">
    <property type="nucleotide sequence ID" value="NC_010498.1"/>
</dbReference>
<dbReference type="SMR" id="B1LDH3"/>
<dbReference type="CAZy" id="GH23">
    <property type="family name" value="Glycoside Hydrolase Family 23"/>
</dbReference>
<dbReference type="KEGG" id="ecm:EcSMS35_3106"/>
<dbReference type="HOGENOM" id="CLU_044583_0_0_6"/>
<dbReference type="Proteomes" id="UP000007011">
    <property type="component" value="Chromosome"/>
</dbReference>
<dbReference type="GO" id="GO:0009279">
    <property type="term" value="C:cell outer membrane"/>
    <property type="evidence" value="ECO:0007669"/>
    <property type="project" value="UniProtKB-SubCell"/>
</dbReference>
<dbReference type="GO" id="GO:0016798">
    <property type="term" value="F:hydrolase activity, acting on glycosyl bonds"/>
    <property type="evidence" value="ECO:0007669"/>
    <property type="project" value="InterPro"/>
</dbReference>
<dbReference type="GO" id="GO:0008933">
    <property type="term" value="F:peptidoglycan lytic transglycosylase activity"/>
    <property type="evidence" value="ECO:0007669"/>
    <property type="project" value="UniProtKB-UniRule"/>
</dbReference>
<dbReference type="GO" id="GO:0016998">
    <property type="term" value="P:cell wall macromolecule catabolic process"/>
    <property type="evidence" value="ECO:0007669"/>
    <property type="project" value="UniProtKB-UniRule"/>
</dbReference>
<dbReference type="GO" id="GO:0071555">
    <property type="term" value="P:cell wall organization"/>
    <property type="evidence" value="ECO:0007669"/>
    <property type="project" value="UniProtKB-KW"/>
</dbReference>
<dbReference type="GO" id="GO:0000270">
    <property type="term" value="P:peptidoglycan metabolic process"/>
    <property type="evidence" value="ECO:0007669"/>
    <property type="project" value="InterPro"/>
</dbReference>
<dbReference type="CDD" id="cd16893">
    <property type="entry name" value="LT_MltC_MltE"/>
    <property type="match status" value="1"/>
</dbReference>
<dbReference type="FunFam" id="1.10.530.10:FF:000002">
    <property type="entry name" value="Membrane-bound lytic murein transglycosylase C"/>
    <property type="match status" value="1"/>
</dbReference>
<dbReference type="Gene3D" id="1.10.530.10">
    <property type="match status" value="1"/>
</dbReference>
<dbReference type="HAMAP" id="MF_01616">
    <property type="entry name" value="MltC"/>
    <property type="match status" value="1"/>
</dbReference>
<dbReference type="InterPro" id="IPR023346">
    <property type="entry name" value="Lysozyme-like_dom_sf"/>
</dbReference>
<dbReference type="InterPro" id="IPR023664">
    <property type="entry name" value="Murein_transglycosylaseC"/>
</dbReference>
<dbReference type="InterPro" id="IPR024570">
    <property type="entry name" value="Murein_transglycosylaseC_N"/>
</dbReference>
<dbReference type="InterPro" id="IPR000189">
    <property type="entry name" value="Transglyc_AS"/>
</dbReference>
<dbReference type="InterPro" id="IPR008258">
    <property type="entry name" value="Transglycosylase_SLT_dom_1"/>
</dbReference>
<dbReference type="NCBIfam" id="NF008670">
    <property type="entry name" value="PRK11671.1"/>
    <property type="match status" value="1"/>
</dbReference>
<dbReference type="PANTHER" id="PTHR37423:SF2">
    <property type="entry name" value="MEMBRANE-BOUND LYTIC MUREIN TRANSGLYCOSYLASE C"/>
    <property type="match status" value="1"/>
</dbReference>
<dbReference type="PANTHER" id="PTHR37423">
    <property type="entry name" value="SOLUBLE LYTIC MUREIN TRANSGLYCOSYLASE-RELATED"/>
    <property type="match status" value="1"/>
</dbReference>
<dbReference type="Pfam" id="PF11873">
    <property type="entry name" value="Mltc_N"/>
    <property type="match status" value="1"/>
</dbReference>
<dbReference type="Pfam" id="PF01464">
    <property type="entry name" value="SLT"/>
    <property type="match status" value="1"/>
</dbReference>
<dbReference type="SUPFAM" id="SSF53955">
    <property type="entry name" value="Lysozyme-like"/>
    <property type="match status" value="1"/>
</dbReference>
<dbReference type="PROSITE" id="PS51257">
    <property type="entry name" value="PROKAR_LIPOPROTEIN"/>
    <property type="match status" value="1"/>
</dbReference>
<dbReference type="PROSITE" id="PS00922">
    <property type="entry name" value="TRANSGLYCOSYLASE"/>
    <property type="match status" value="1"/>
</dbReference>
<sequence length="359" mass="40125">MKKYLALALIAPLLISCSTTKKGDTYNEAWVKDTNGFDILMGQFAHNIENIWGFKEVVIAGPKDYVKYTDQYQTRSHINFDDGTITIETIAGTEPAAHLRRAIIKTLLMGDDPSSVDLYSDVDDITISKEPFLYGQVVDNTGQPIRWEGRASNFADYLLKNRLKSRSNGLRIIYSVTINMVPNHLDKRAHKYLGMVRQASRKYGVDESLILAIMQTESSFNPYAVSRSDALGLMQVVQHTAGKDVFRSQGKSGTPSRSFLFDPASNIDIGTAYLAMLNNVYLGGIDNPTSRRYAVITAYNGGAGSVLRVFSNDKIQAANIINTMTPGDVYQTLTTRHPSAESRRYLYKVNTAQKSYRRR</sequence>
<feature type="signal peptide" evidence="1">
    <location>
        <begin position="1"/>
        <end position="16"/>
    </location>
</feature>
<feature type="chain" id="PRO_1000185927" description="Membrane-bound lytic murein transglycosylase C">
    <location>
        <begin position="17"/>
        <end position="359"/>
    </location>
</feature>
<feature type="lipid moiety-binding region" description="N-palmitoyl cysteine" evidence="1">
    <location>
        <position position="17"/>
    </location>
</feature>
<feature type="lipid moiety-binding region" description="S-diacylglycerol cysteine" evidence="1">
    <location>
        <position position="17"/>
    </location>
</feature>
<gene>
    <name evidence="1" type="primary">mltC</name>
    <name type="ordered locus">EcSMS35_3106</name>
</gene>
<evidence type="ECO:0000255" key="1">
    <source>
        <dbReference type="HAMAP-Rule" id="MF_01616"/>
    </source>
</evidence>
<comment type="function">
    <text evidence="1">Murein-degrading enzyme. May play a role in recycling of muropeptides during cell elongation and/or cell division.</text>
</comment>
<comment type="catalytic activity">
    <reaction evidence="1">
        <text>Exolytic cleavage of the (1-&gt;4)-beta-glycosidic linkage between N-acetylmuramic acid (MurNAc) and N-acetylglucosamine (GlcNAc) residues in peptidoglycan, from either the reducing or the non-reducing ends of the peptidoglycan chains, with concomitant formation of a 1,6-anhydrobond in the MurNAc residue.</text>
        <dbReference type="EC" id="4.2.2.n1"/>
    </reaction>
</comment>
<comment type="subcellular location">
    <subcellularLocation>
        <location evidence="1">Cell outer membrane</location>
        <topology evidence="1">Lipid-anchor</topology>
    </subcellularLocation>
</comment>
<comment type="similarity">
    <text evidence="1">Belongs to the transglycosylase Slt family.</text>
</comment>
<accession>B1LDH3</accession>